<protein>
    <recommendedName>
        <fullName evidence="4">Immediate early response 3-interacting protein 1</fullName>
    </recommendedName>
</protein>
<evidence type="ECO:0000250" key="1">
    <source>
        <dbReference type="UniProtKB" id="Q9Y5U9"/>
    </source>
</evidence>
<evidence type="ECO:0000255" key="2"/>
<evidence type="ECO:0000269" key="3">
    <source>
    </source>
</evidence>
<evidence type="ECO:0000305" key="4"/>
<evidence type="ECO:0000312" key="5">
    <source>
        <dbReference type="EMBL" id="AAH21512.1"/>
    </source>
</evidence>
<evidence type="ECO:0000312" key="6">
    <source>
        <dbReference type="EMBL" id="BAB23248.1"/>
    </source>
</evidence>
<evidence type="ECO:0000312" key="7">
    <source>
        <dbReference type="EMBL" id="BAB25005.1"/>
    </source>
</evidence>
<evidence type="ECO:0000312" key="8">
    <source>
        <dbReference type="EMBL" id="BAB26081.1"/>
    </source>
</evidence>
<evidence type="ECO:0000312" key="9">
    <source>
        <dbReference type="MGI" id="MGI:1913441"/>
    </source>
</evidence>
<organism>
    <name type="scientific">Mus musculus</name>
    <name type="common">Mouse</name>
    <dbReference type="NCBI Taxonomy" id="10090"/>
    <lineage>
        <taxon>Eukaryota</taxon>
        <taxon>Metazoa</taxon>
        <taxon>Chordata</taxon>
        <taxon>Craniata</taxon>
        <taxon>Vertebrata</taxon>
        <taxon>Euteleostomi</taxon>
        <taxon>Mammalia</taxon>
        <taxon>Eutheria</taxon>
        <taxon>Euarchontoglires</taxon>
        <taxon>Glires</taxon>
        <taxon>Rodentia</taxon>
        <taxon>Myomorpha</taxon>
        <taxon>Muroidea</taxon>
        <taxon>Muridae</taxon>
        <taxon>Murinae</taxon>
        <taxon>Mus</taxon>
        <taxon>Mus</taxon>
    </lineage>
</organism>
<proteinExistence type="inferred from homology"/>
<sequence>MAFTLYSLMQAALLCVNAIAVLHEERFLKNIGWGTDQGIGGFGEEPGIKSQLMNLIRSVRTVMRVPLIIVNSITIVLLLLFG</sequence>
<name>IR3IP_MOUSE</name>
<accession>Q9CR20</accession>
<dbReference type="EMBL" id="AK004281">
    <property type="protein sequence ID" value="BAB23248.1"/>
    <property type="molecule type" value="mRNA"/>
</dbReference>
<dbReference type="EMBL" id="AK007388">
    <property type="protein sequence ID" value="BAB25005.1"/>
    <property type="molecule type" value="mRNA"/>
</dbReference>
<dbReference type="EMBL" id="AK007862">
    <property type="protein sequence ID" value="BAB25314.1"/>
    <property type="molecule type" value="mRNA"/>
</dbReference>
<dbReference type="EMBL" id="AK009116">
    <property type="protein sequence ID" value="BAB26081.1"/>
    <property type="molecule type" value="mRNA"/>
</dbReference>
<dbReference type="EMBL" id="BC021512">
    <property type="protein sequence ID" value="AAH21512.1"/>
    <property type="molecule type" value="mRNA"/>
</dbReference>
<dbReference type="CCDS" id="CCDS37862.1"/>
<dbReference type="RefSeq" id="NP_079685.1">
    <property type="nucleotide sequence ID" value="NM_025409.3"/>
</dbReference>
<dbReference type="FunCoup" id="Q9CR20">
    <property type="interactions" value="2161"/>
</dbReference>
<dbReference type="STRING" id="10090.ENSMUSP00000026487"/>
<dbReference type="PhosphoSitePlus" id="Q9CR20"/>
<dbReference type="PaxDb" id="10090-ENSMUSP00000026487"/>
<dbReference type="ProteomicsDB" id="268991"/>
<dbReference type="Pumba" id="Q9CR20"/>
<dbReference type="DNASU" id="66191"/>
<dbReference type="Ensembl" id="ENSMUST00000026487.6">
    <property type="protein sequence ID" value="ENSMUSP00000026487.5"/>
    <property type="gene ID" value="ENSMUSG00000090000.3"/>
</dbReference>
<dbReference type="GeneID" id="66191"/>
<dbReference type="KEGG" id="mmu:66191"/>
<dbReference type="UCSC" id="uc008fqr.2">
    <property type="organism name" value="mouse"/>
</dbReference>
<dbReference type="AGR" id="MGI:1913441"/>
<dbReference type="CTD" id="51124"/>
<dbReference type="MGI" id="MGI:1913441">
    <property type="gene designation" value="Ier3ip1"/>
</dbReference>
<dbReference type="VEuPathDB" id="HostDB:ENSMUSG00000090000"/>
<dbReference type="eggNOG" id="KOG4779">
    <property type="taxonomic scope" value="Eukaryota"/>
</dbReference>
<dbReference type="GeneTree" id="ENSGT01030000236530"/>
<dbReference type="HOGENOM" id="CLU_152125_3_0_1"/>
<dbReference type="InParanoid" id="Q9CR20"/>
<dbReference type="OMA" id="VQTVMRM"/>
<dbReference type="OrthoDB" id="38272at9989"/>
<dbReference type="PhylomeDB" id="Q9CR20"/>
<dbReference type="TreeFam" id="TF300263"/>
<dbReference type="BioGRID-ORCS" id="66191">
    <property type="hits" value="12 hits in 75 CRISPR screens"/>
</dbReference>
<dbReference type="ChiTaRS" id="Ier3ip1">
    <property type="organism name" value="mouse"/>
</dbReference>
<dbReference type="PRO" id="PR:Q9CR20"/>
<dbReference type="Proteomes" id="UP000000589">
    <property type="component" value="Chromosome 18"/>
</dbReference>
<dbReference type="RNAct" id="Q9CR20">
    <property type="molecule type" value="protein"/>
</dbReference>
<dbReference type="Bgee" id="ENSMUSG00000090000">
    <property type="expression patterns" value="Expressed in humerus cartilage element and 269 other cell types or tissues"/>
</dbReference>
<dbReference type="ExpressionAtlas" id="Q9CR20">
    <property type="expression patterns" value="baseline and differential"/>
</dbReference>
<dbReference type="GO" id="GO:0005789">
    <property type="term" value="C:endoplasmic reticulum membrane"/>
    <property type="evidence" value="ECO:0000250"/>
    <property type="project" value="UniProtKB"/>
</dbReference>
<dbReference type="GO" id="GO:0005794">
    <property type="term" value="C:Golgi apparatus"/>
    <property type="evidence" value="ECO:0007669"/>
    <property type="project" value="Ensembl"/>
</dbReference>
<dbReference type="GO" id="GO:0007420">
    <property type="term" value="P:brain development"/>
    <property type="evidence" value="ECO:0000250"/>
    <property type="project" value="UniProtKB"/>
</dbReference>
<dbReference type="GO" id="GO:0048469">
    <property type="term" value="P:cell maturation"/>
    <property type="evidence" value="ECO:0000315"/>
    <property type="project" value="MGI"/>
</dbReference>
<dbReference type="GO" id="GO:0006325">
    <property type="term" value="P:chromatin organization"/>
    <property type="evidence" value="ECO:0000315"/>
    <property type="project" value="MGI"/>
</dbReference>
<dbReference type="GO" id="GO:0007029">
    <property type="term" value="P:endoplasmic reticulum organization"/>
    <property type="evidence" value="ECO:0000315"/>
    <property type="project" value="MGI"/>
</dbReference>
<dbReference type="GO" id="GO:0010467">
    <property type="term" value="P:gene expression"/>
    <property type="evidence" value="ECO:0000315"/>
    <property type="project" value="MGI"/>
</dbReference>
<dbReference type="GO" id="GO:0042593">
    <property type="term" value="P:glucose homeostasis"/>
    <property type="evidence" value="ECO:0000315"/>
    <property type="project" value="MGI"/>
</dbReference>
<dbReference type="GO" id="GO:1901142">
    <property type="term" value="P:insulin metabolic process"/>
    <property type="evidence" value="ECO:0000315"/>
    <property type="project" value="MGI"/>
</dbReference>
<dbReference type="GO" id="GO:0043066">
    <property type="term" value="P:negative regulation of apoptotic process"/>
    <property type="evidence" value="ECO:0000315"/>
    <property type="project" value="MGI"/>
</dbReference>
<dbReference type="GO" id="GO:0008285">
    <property type="term" value="P:negative regulation of cell population proliferation"/>
    <property type="evidence" value="ECO:0000315"/>
    <property type="project" value="MGI"/>
</dbReference>
<dbReference type="GO" id="GO:0035265">
    <property type="term" value="P:organ growth"/>
    <property type="evidence" value="ECO:0000250"/>
    <property type="project" value="UniProtKB"/>
</dbReference>
<dbReference type="GO" id="GO:0003331">
    <property type="term" value="P:positive regulation of extracellular matrix constituent secretion"/>
    <property type="evidence" value="ECO:0000250"/>
    <property type="project" value="UniProtKB"/>
</dbReference>
<dbReference type="GO" id="GO:0050714">
    <property type="term" value="P:positive regulation of protein secretion"/>
    <property type="evidence" value="ECO:0000250"/>
    <property type="project" value="UniProtKB"/>
</dbReference>
<dbReference type="GO" id="GO:0015031">
    <property type="term" value="P:protein transport"/>
    <property type="evidence" value="ECO:0007669"/>
    <property type="project" value="UniProtKB-KW"/>
</dbReference>
<dbReference type="GO" id="GO:2000269">
    <property type="term" value="P:regulation of fibroblast apoptotic process"/>
    <property type="evidence" value="ECO:0000250"/>
    <property type="project" value="UniProtKB"/>
</dbReference>
<dbReference type="GO" id="GO:0003309">
    <property type="term" value="P:type B pancreatic cell differentiation"/>
    <property type="evidence" value="ECO:0000315"/>
    <property type="project" value="MGI"/>
</dbReference>
<dbReference type="InterPro" id="IPR013880">
    <property type="entry name" value="Yos1"/>
</dbReference>
<dbReference type="PANTHER" id="PTHR15858">
    <property type="entry name" value="IMMEDIATE EARLY RESPONSE 3-INTERACTING PROTEIN 1"/>
    <property type="match status" value="1"/>
</dbReference>
<dbReference type="PANTHER" id="PTHR15858:SF0">
    <property type="entry name" value="IMMEDIATE EARLY RESPONSE 3-INTERACTING PROTEIN 1"/>
    <property type="match status" value="1"/>
</dbReference>
<dbReference type="Pfam" id="PF08571">
    <property type="entry name" value="Yos1"/>
    <property type="match status" value="1"/>
</dbReference>
<keyword id="KW-0256">Endoplasmic reticulum</keyword>
<keyword id="KW-0472">Membrane</keyword>
<keyword id="KW-0653">Protein transport</keyword>
<keyword id="KW-1185">Reference proteome</keyword>
<keyword id="KW-0812">Transmembrane</keyword>
<keyword id="KW-1133">Transmembrane helix</keyword>
<keyword id="KW-0813">Transport</keyword>
<comment type="function">
    <text evidence="1 3">Regulator of endoplasmic reticulum secretion that acts as a key determinant of brain size. Required for secretion of extracellular matrix proteins. Required for correct brain development by depositing sufficient extracellular matrix proteins for tissue integrity and the proliferation of neural progenitors (By similarity). Acts as a regulator of the unfolded protein response (UPR) (PubMed:28915629).</text>
</comment>
<comment type="subcellular location">
    <subcellularLocation>
        <location evidence="1">Endoplasmic reticulum membrane</location>
        <topology evidence="2">Multi-pass membrane protein</topology>
    </subcellularLocation>
</comment>
<comment type="similarity">
    <text evidence="4">Belongs to the YOS1 family.</text>
</comment>
<gene>
    <name evidence="9" type="primary">Ier3ip1</name>
</gene>
<reference key="1">
    <citation type="journal article" date="2005" name="Science">
        <title>The transcriptional landscape of the mammalian genome.</title>
        <authorList>
            <person name="Carninci P."/>
            <person name="Kasukawa T."/>
            <person name="Katayama S."/>
            <person name="Gough J."/>
            <person name="Frith M.C."/>
            <person name="Maeda N."/>
            <person name="Oyama R."/>
            <person name="Ravasi T."/>
            <person name="Lenhard B."/>
            <person name="Wells C."/>
            <person name="Kodzius R."/>
            <person name="Shimokawa K."/>
            <person name="Bajic V.B."/>
            <person name="Brenner S.E."/>
            <person name="Batalov S."/>
            <person name="Forrest A.R."/>
            <person name="Zavolan M."/>
            <person name="Davis M.J."/>
            <person name="Wilming L.G."/>
            <person name="Aidinis V."/>
            <person name="Allen J.E."/>
            <person name="Ambesi-Impiombato A."/>
            <person name="Apweiler R."/>
            <person name="Aturaliya R.N."/>
            <person name="Bailey T.L."/>
            <person name="Bansal M."/>
            <person name="Baxter L."/>
            <person name="Beisel K.W."/>
            <person name="Bersano T."/>
            <person name="Bono H."/>
            <person name="Chalk A.M."/>
            <person name="Chiu K.P."/>
            <person name="Choudhary V."/>
            <person name="Christoffels A."/>
            <person name="Clutterbuck D.R."/>
            <person name="Crowe M.L."/>
            <person name="Dalla E."/>
            <person name="Dalrymple B.P."/>
            <person name="de Bono B."/>
            <person name="Della Gatta G."/>
            <person name="di Bernardo D."/>
            <person name="Down T."/>
            <person name="Engstrom P."/>
            <person name="Fagiolini M."/>
            <person name="Faulkner G."/>
            <person name="Fletcher C.F."/>
            <person name="Fukushima T."/>
            <person name="Furuno M."/>
            <person name="Futaki S."/>
            <person name="Gariboldi M."/>
            <person name="Georgii-Hemming P."/>
            <person name="Gingeras T.R."/>
            <person name="Gojobori T."/>
            <person name="Green R.E."/>
            <person name="Gustincich S."/>
            <person name="Harbers M."/>
            <person name="Hayashi Y."/>
            <person name="Hensch T.K."/>
            <person name="Hirokawa N."/>
            <person name="Hill D."/>
            <person name="Huminiecki L."/>
            <person name="Iacono M."/>
            <person name="Ikeo K."/>
            <person name="Iwama A."/>
            <person name="Ishikawa T."/>
            <person name="Jakt M."/>
            <person name="Kanapin A."/>
            <person name="Katoh M."/>
            <person name="Kawasawa Y."/>
            <person name="Kelso J."/>
            <person name="Kitamura H."/>
            <person name="Kitano H."/>
            <person name="Kollias G."/>
            <person name="Krishnan S.P."/>
            <person name="Kruger A."/>
            <person name="Kummerfeld S.K."/>
            <person name="Kurochkin I.V."/>
            <person name="Lareau L.F."/>
            <person name="Lazarevic D."/>
            <person name="Lipovich L."/>
            <person name="Liu J."/>
            <person name="Liuni S."/>
            <person name="McWilliam S."/>
            <person name="Madan Babu M."/>
            <person name="Madera M."/>
            <person name="Marchionni L."/>
            <person name="Matsuda H."/>
            <person name="Matsuzawa S."/>
            <person name="Miki H."/>
            <person name="Mignone F."/>
            <person name="Miyake S."/>
            <person name="Morris K."/>
            <person name="Mottagui-Tabar S."/>
            <person name="Mulder N."/>
            <person name="Nakano N."/>
            <person name="Nakauchi H."/>
            <person name="Ng P."/>
            <person name="Nilsson R."/>
            <person name="Nishiguchi S."/>
            <person name="Nishikawa S."/>
            <person name="Nori F."/>
            <person name="Ohara O."/>
            <person name="Okazaki Y."/>
            <person name="Orlando V."/>
            <person name="Pang K.C."/>
            <person name="Pavan W.J."/>
            <person name="Pavesi G."/>
            <person name="Pesole G."/>
            <person name="Petrovsky N."/>
            <person name="Piazza S."/>
            <person name="Reed J."/>
            <person name="Reid J.F."/>
            <person name="Ring B.Z."/>
            <person name="Ringwald M."/>
            <person name="Rost B."/>
            <person name="Ruan Y."/>
            <person name="Salzberg S.L."/>
            <person name="Sandelin A."/>
            <person name="Schneider C."/>
            <person name="Schoenbach C."/>
            <person name="Sekiguchi K."/>
            <person name="Semple C.A."/>
            <person name="Seno S."/>
            <person name="Sessa L."/>
            <person name="Sheng Y."/>
            <person name="Shibata Y."/>
            <person name="Shimada H."/>
            <person name="Shimada K."/>
            <person name="Silva D."/>
            <person name="Sinclair B."/>
            <person name="Sperling S."/>
            <person name="Stupka E."/>
            <person name="Sugiura K."/>
            <person name="Sultana R."/>
            <person name="Takenaka Y."/>
            <person name="Taki K."/>
            <person name="Tammoja K."/>
            <person name="Tan S.L."/>
            <person name="Tang S."/>
            <person name="Taylor M.S."/>
            <person name="Tegner J."/>
            <person name="Teichmann S.A."/>
            <person name="Ueda H.R."/>
            <person name="van Nimwegen E."/>
            <person name="Verardo R."/>
            <person name="Wei C.L."/>
            <person name="Yagi K."/>
            <person name="Yamanishi H."/>
            <person name="Zabarovsky E."/>
            <person name="Zhu S."/>
            <person name="Zimmer A."/>
            <person name="Hide W."/>
            <person name="Bult C."/>
            <person name="Grimmond S.M."/>
            <person name="Teasdale R.D."/>
            <person name="Liu E.T."/>
            <person name="Brusic V."/>
            <person name="Quackenbush J."/>
            <person name="Wahlestedt C."/>
            <person name="Mattick J.S."/>
            <person name="Hume D.A."/>
            <person name="Kai C."/>
            <person name="Sasaki D."/>
            <person name="Tomaru Y."/>
            <person name="Fukuda S."/>
            <person name="Kanamori-Katayama M."/>
            <person name="Suzuki M."/>
            <person name="Aoki J."/>
            <person name="Arakawa T."/>
            <person name="Iida J."/>
            <person name="Imamura K."/>
            <person name="Itoh M."/>
            <person name="Kato T."/>
            <person name="Kawaji H."/>
            <person name="Kawagashira N."/>
            <person name="Kawashima T."/>
            <person name="Kojima M."/>
            <person name="Kondo S."/>
            <person name="Konno H."/>
            <person name="Nakano K."/>
            <person name="Ninomiya N."/>
            <person name="Nishio T."/>
            <person name="Okada M."/>
            <person name="Plessy C."/>
            <person name="Shibata K."/>
            <person name="Shiraki T."/>
            <person name="Suzuki S."/>
            <person name="Tagami M."/>
            <person name="Waki K."/>
            <person name="Watahiki A."/>
            <person name="Okamura-Oho Y."/>
            <person name="Suzuki H."/>
            <person name="Kawai J."/>
            <person name="Hayashizaki Y."/>
        </authorList>
    </citation>
    <scope>NUCLEOTIDE SEQUENCE [LARGE SCALE MRNA]</scope>
    <source>
        <strain evidence="6">C57BL/6J</strain>
        <tissue evidence="6">Embryo</tissue>
        <tissue evidence="7">Pancreas</tissue>
        <tissue evidence="8">Tongue</tissue>
    </source>
</reference>
<reference key="2">
    <citation type="journal article" date="2004" name="Genome Res.">
        <title>The status, quality, and expansion of the NIH full-length cDNA project: the Mammalian Gene Collection (MGC).</title>
        <authorList>
            <consortium name="The MGC Project Team"/>
        </authorList>
    </citation>
    <scope>NUCLEOTIDE SEQUENCE [LARGE SCALE MRNA]</scope>
    <source>
        <strain evidence="5">FVB/N</strain>
        <tissue evidence="5">Mammary gland</tissue>
    </source>
</reference>
<reference key="3">
    <citation type="journal article" date="2017" name="Oncotarget">
        <title>IER3IP1 deficiency leads to increased beta-cell death and decreased beta-cell proliferation.</title>
        <authorList>
            <person name="Sun J."/>
            <person name="Ren D."/>
        </authorList>
    </citation>
    <scope>FUNCTION</scope>
</reference>
<feature type="chain" id="PRO_0000257962" description="Immediate early response 3-interacting protein 1">
    <location>
        <begin position="1"/>
        <end position="82"/>
    </location>
</feature>
<feature type="transmembrane region" description="Helical" evidence="2">
    <location>
        <begin position="2"/>
        <end position="22"/>
    </location>
</feature>
<feature type="transmembrane region" description="Helical" evidence="2">
    <location>
        <begin position="62"/>
        <end position="82"/>
    </location>
</feature>